<feature type="signal peptide" evidence="3">
    <location>
        <begin position="1"/>
        <end position="24"/>
    </location>
</feature>
<feature type="propeptide" id="PRO_0000436741" evidence="2">
    <location>
        <begin position="25"/>
        <end position="50"/>
    </location>
</feature>
<feature type="chain" id="PRO_0000436742" description="Major fimbrium tip subunit FimD">
    <location>
        <begin position="51"/>
        <end position="670"/>
    </location>
</feature>
<feature type="lipid moiety-binding region" description="N-palmitoyl cysteine" evidence="3">
    <location>
        <position position="25"/>
    </location>
</feature>
<feature type="lipid moiety-binding region" description="S-diacylglycerol cysteine" evidence="3">
    <location>
        <position position="25"/>
    </location>
</feature>
<comment type="function">
    <text evidence="1">Probably a component of the fimbrium tip. These long, filamentous pili are attached to the cell surface; they mediate biofilm formation, adhesion onto host cells and onto other bacteria that are part of the oral microbiome. They play an important role in invasion of periodontal tissues and are major virulence factors. FimC, FimD and FimE contribute to interaction with host CXCR4 and thereby down-regulate the TLR2-mediated host immune response.</text>
</comment>
<comment type="subunit">
    <text evidence="1">Fimbriae are composed of a major, structural subunit and the minor components FimC, FimD and FimE. Identified in a complex composed of FimC, FimD and FimE (in vitro). The complex interacts with host extracellular matrix proteins, including fibronectin and type I collagen. Interacts with host CXCR4.</text>
</comment>
<comment type="subcellular location">
    <subcellularLocation>
        <location evidence="1">Fimbrium</location>
    </subcellularLocation>
    <subcellularLocation>
        <location evidence="1">Cell outer membrane</location>
    </subcellularLocation>
    <text evidence="1 4">Probably synthesized as a palmitoylated precursor. Efficient export to the outer membrane and integration into fimbriae requires lipidation and subsequent proteolytic removal of the lipidated propeptide (Probable). Probably part of the fimbrium tip, as a part of the complex formed by FimC, FimD and FimE.</text>
</comment>
<comment type="miscellaneous">
    <text evidence="4">The name (major fimbrium subunit) does not indicate the abundance of the protein, but is derived from the greater length of the major fimbriae. In strain ATCC 33277 and strain ATCC BAA-1703 / FDC 381, major fimbriae are 300 - 1600 nM in length and about 5 nm in diameter. In contrast, minor fimbriae are only about 80 - 120 nm long. This length difference is observed only in a small number of strains, including strain ATCC 33277 and strain ATCC BAA-1703 / FDC 381, and is due to a loss of function mutation in FimB, a protein that restricts fimbrial length in other strains.</text>
</comment>
<comment type="similarity">
    <text evidence="4">Belongs to the FimD family.</text>
</comment>
<proteinExistence type="inferred from homology"/>
<protein>
    <recommendedName>
        <fullName>Major fimbrium tip subunit FimD</fullName>
    </recommendedName>
</protein>
<reference evidence="5" key="1">
    <citation type="journal article" date="1996" name="Microbiol. Immunol.">
        <title>Sequence and product analyses of the four genes downstream from the fimbrilin gene(fimA) of the oral anaerobe Porphyromonas gingivalis.</title>
        <authorList>
            <person name="Watanabe K."/>
            <person name="Onoe T."/>
            <person name="Ozeki M."/>
            <person name="Shimizu Y."/>
            <person name="Sakayori T."/>
            <person name="Nakamura H."/>
            <person name="Yoshimura F."/>
        </authorList>
    </citation>
    <scope>NUCLEOTIDE SEQUENCE [GENOMIC DNA]</scope>
    <source>
        <strain evidence="5">ATCC BAA-1703 / FDC 381</strain>
    </source>
</reference>
<reference evidence="5" key="2">
    <citation type="journal article" date="2007" name="Microbiology">
        <title>Involvement of minor components associated with the FimA fimbriae of Porphyromonas gingivalis in adhesive functions.</title>
        <authorList>
            <person name="Nishiyama S."/>
            <person name="Murakami Y."/>
            <person name="Nagata H."/>
            <person name="Shizukuishi S."/>
            <person name="Kawagishi I."/>
            <person name="Yoshimura F."/>
        </authorList>
    </citation>
    <scope>NUCLEOTIDE SEQUENCE [GENOMIC DNA]</scope>
    <source>
        <strain evidence="5">ATCC BAA-1703 / FDC 381</strain>
    </source>
</reference>
<dbReference type="EMBL" id="D42067">
    <property type="protein sequence ID" value="BAA22417.1"/>
    <property type="molecule type" value="Genomic_DNA"/>
</dbReference>
<dbReference type="RefSeq" id="WP_012457310.1">
    <property type="nucleotide sequence ID" value="NZ_JAVIVL010000003.1"/>
</dbReference>
<dbReference type="SMR" id="O32389"/>
<dbReference type="GO" id="GO:0009279">
    <property type="term" value="C:cell outer membrane"/>
    <property type="evidence" value="ECO:0007669"/>
    <property type="project" value="UniProtKB-SubCell"/>
</dbReference>
<dbReference type="GO" id="GO:0009289">
    <property type="term" value="C:pilus"/>
    <property type="evidence" value="ECO:0000250"/>
    <property type="project" value="UniProtKB"/>
</dbReference>
<dbReference type="GO" id="GO:0046810">
    <property type="term" value="F:host cell extracellular matrix binding"/>
    <property type="evidence" value="ECO:0000250"/>
    <property type="project" value="UniProtKB"/>
</dbReference>
<dbReference type="GO" id="GO:0098609">
    <property type="term" value="P:cell-cell adhesion"/>
    <property type="evidence" value="ECO:0000250"/>
    <property type="project" value="UniProtKB"/>
</dbReference>
<dbReference type="Gene3D" id="2.60.40.3690">
    <property type="match status" value="1"/>
</dbReference>
<dbReference type="PROSITE" id="PS51257">
    <property type="entry name" value="PROKAR_LIPOPROTEIN"/>
    <property type="match status" value="1"/>
</dbReference>
<organism evidence="5">
    <name type="scientific">Porphyromonas gingivalis</name>
    <name type="common">Bacteroides gingivalis</name>
    <dbReference type="NCBI Taxonomy" id="837"/>
    <lineage>
        <taxon>Bacteria</taxon>
        <taxon>Pseudomonadati</taxon>
        <taxon>Bacteroidota</taxon>
        <taxon>Bacteroidia</taxon>
        <taxon>Bacteroidales</taxon>
        <taxon>Porphyromonadaceae</taxon>
        <taxon>Porphyromonas</taxon>
    </lineage>
</organism>
<sequence>MRTNRILNIICPPILFLLVGFLFGCVREDIESDMNETSSLFLQVQPYNQRSEEGGVAAYDENTIERLTLVFYKNGTKVWQAEPVETSPSSNSYYVPVPESMYGQFNGNNSFKIYLVANVNFSGSFEPNASETSFLKTLVPNSILLQNDGKPEDKFAMIGSVEKQINMATSEGKQLGSIELKRVAAKLRLKKPVLNISDYELVGDPKAKFRNCMPKGFLSVEEKPEGVGYEAIDYRPMTEANSSVHFYSYYNEWALNNEGRPEFVMMLKLKKTGTDDNTAKPYYYRIPVDGSDKKIRSNHLYDMAVTIEVLGSLNEEDPVTINGSLSVIEWTSHSDDQTLPDVQYLEVIPQETVMNMTTEIELDYFSSHSLLPPADVKATCTYVNSNGQQITDTYTGANVPTVTIDANTKKIKVRSILPINNIPKDISFTIKNSIGFEKKIKIRQNPSQFIINTFGTKSSWQPEGNLAPNLNNKAIYQIVVLSPPADGNMIIGFPPTKEVGFYKKSGSSYTLKHTDRITEQDEQTANMVSPSFELASQLGATLVQDHWEYYTLNPLRLIYHSNQQNRYALMTCAFYWEERKKADGTIERLDDWRLPTRAEIQLVDKLQREQAGVVRDIMTGRYYWSGLPDKAIKILLPTASGNATEQRAHVRCVRDVKNDRFVKSAKRLKK</sequence>
<evidence type="ECO:0000250" key="1">
    <source>
        <dbReference type="UniProtKB" id="B2RH58"/>
    </source>
</evidence>
<evidence type="ECO:0000255" key="2"/>
<evidence type="ECO:0000255" key="3">
    <source>
        <dbReference type="PROSITE-ProRule" id="PRU00303"/>
    </source>
</evidence>
<evidence type="ECO:0000305" key="4"/>
<evidence type="ECO:0000312" key="5">
    <source>
        <dbReference type="EMBL" id="BAA22417.1"/>
    </source>
</evidence>
<accession>O32389</accession>
<name>FIMD_PORGN</name>
<keyword id="KW-0998">Cell outer membrane</keyword>
<keyword id="KW-0281">Fimbrium</keyword>
<keyword id="KW-0449">Lipoprotein</keyword>
<keyword id="KW-0472">Membrane</keyword>
<keyword id="KW-0564">Palmitate</keyword>
<keyword id="KW-0732">Signal</keyword>
<keyword id="KW-0843">Virulence</keyword>
<gene>
    <name evidence="5" type="primary">fimD</name>
</gene>